<name>QUEC_AZOC5</name>
<gene>
    <name evidence="1" type="primary">queC</name>
    <name type="ordered locus">AZC_3675</name>
</gene>
<accession>A8IMX7</accession>
<sequence>MSADAGPGSGALVLFSGGQDSTTTLAWALDRFERVETLGFDYGQRHRIELDCRVKVRAAMAALNPAWAAKLGEDHTLALDALGAVSDTALTRDVAIEMTEGGLPNTFVPGRNIVFLTFAAALAYRRGLKHIVGGMCETDFSGYPDCRDDTIKALQVALNLGMDRRFVLETPLMWIDKAETWRLAERLGGRALVDLIVEDTHTCYLGERGPRHPWGHGCGTCPACQLRAEGFARYEAARVSE</sequence>
<feature type="chain" id="PRO_0000336891" description="7-cyano-7-deazaguanine synthase">
    <location>
        <begin position="1"/>
        <end position="241"/>
    </location>
</feature>
<feature type="binding site" evidence="1">
    <location>
        <begin position="15"/>
        <end position="25"/>
    </location>
    <ligand>
        <name>ATP</name>
        <dbReference type="ChEBI" id="CHEBI:30616"/>
    </ligand>
</feature>
<feature type="binding site" evidence="1">
    <location>
        <position position="203"/>
    </location>
    <ligand>
        <name>Zn(2+)</name>
        <dbReference type="ChEBI" id="CHEBI:29105"/>
    </ligand>
</feature>
<feature type="binding site" evidence="1">
    <location>
        <position position="218"/>
    </location>
    <ligand>
        <name>Zn(2+)</name>
        <dbReference type="ChEBI" id="CHEBI:29105"/>
    </ligand>
</feature>
<feature type="binding site" evidence="1">
    <location>
        <position position="221"/>
    </location>
    <ligand>
        <name>Zn(2+)</name>
        <dbReference type="ChEBI" id="CHEBI:29105"/>
    </ligand>
</feature>
<feature type="binding site" evidence="1">
    <location>
        <position position="224"/>
    </location>
    <ligand>
        <name>Zn(2+)</name>
        <dbReference type="ChEBI" id="CHEBI:29105"/>
    </ligand>
</feature>
<keyword id="KW-0067">ATP-binding</keyword>
<keyword id="KW-0436">Ligase</keyword>
<keyword id="KW-0479">Metal-binding</keyword>
<keyword id="KW-0547">Nucleotide-binding</keyword>
<keyword id="KW-0671">Queuosine biosynthesis</keyword>
<keyword id="KW-1185">Reference proteome</keyword>
<keyword id="KW-0862">Zinc</keyword>
<dbReference type="EC" id="6.3.4.20" evidence="1"/>
<dbReference type="EMBL" id="AP009384">
    <property type="protein sequence ID" value="BAF89673.1"/>
    <property type="molecule type" value="Genomic_DNA"/>
</dbReference>
<dbReference type="RefSeq" id="WP_012172198.1">
    <property type="nucleotide sequence ID" value="NC_009937.1"/>
</dbReference>
<dbReference type="SMR" id="A8IMX7"/>
<dbReference type="STRING" id="438753.AZC_3675"/>
<dbReference type="KEGG" id="azc:AZC_3675"/>
<dbReference type="eggNOG" id="COG0603">
    <property type="taxonomic scope" value="Bacteria"/>
</dbReference>
<dbReference type="HOGENOM" id="CLU_081854_0_0_5"/>
<dbReference type="UniPathway" id="UPA00391"/>
<dbReference type="Proteomes" id="UP000000270">
    <property type="component" value="Chromosome"/>
</dbReference>
<dbReference type="GO" id="GO:0005524">
    <property type="term" value="F:ATP binding"/>
    <property type="evidence" value="ECO:0007669"/>
    <property type="project" value="UniProtKB-UniRule"/>
</dbReference>
<dbReference type="GO" id="GO:0016879">
    <property type="term" value="F:ligase activity, forming carbon-nitrogen bonds"/>
    <property type="evidence" value="ECO:0007669"/>
    <property type="project" value="UniProtKB-UniRule"/>
</dbReference>
<dbReference type="GO" id="GO:0008270">
    <property type="term" value="F:zinc ion binding"/>
    <property type="evidence" value="ECO:0007669"/>
    <property type="project" value="UniProtKB-UniRule"/>
</dbReference>
<dbReference type="GO" id="GO:0008616">
    <property type="term" value="P:queuosine biosynthetic process"/>
    <property type="evidence" value="ECO:0007669"/>
    <property type="project" value="UniProtKB-UniRule"/>
</dbReference>
<dbReference type="CDD" id="cd01995">
    <property type="entry name" value="QueC-like"/>
    <property type="match status" value="1"/>
</dbReference>
<dbReference type="Gene3D" id="3.40.50.620">
    <property type="entry name" value="HUPs"/>
    <property type="match status" value="1"/>
</dbReference>
<dbReference type="HAMAP" id="MF_01633">
    <property type="entry name" value="QueC"/>
    <property type="match status" value="1"/>
</dbReference>
<dbReference type="InterPro" id="IPR018317">
    <property type="entry name" value="QueC"/>
</dbReference>
<dbReference type="InterPro" id="IPR014729">
    <property type="entry name" value="Rossmann-like_a/b/a_fold"/>
</dbReference>
<dbReference type="NCBIfam" id="TIGR00364">
    <property type="entry name" value="7-cyano-7-deazaguanine synthase QueC"/>
    <property type="match status" value="1"/>
</dbReference>
<dbReference type="PANTHER" id="PTHR42914">
    <property type="entry name" value="7-CYANO-7-DEAZAGUANINE SYNTHASE"/>
    <property type="match status" value="1"/>
</dbReference>
<dbReference type="PANTHER" id="PTHR42914:SF1">
    <property type="entry name" value="7-CYANO-7-DEAZAGUANINE SYNTHASE"/>
    <property type="match status" value="1"/>
</dbReference>
<dbReference type="Pfam" id="PF06508">
    <property type="entry name" value="QueC"/>
    <property type="match status" value="1"/>
</dbReference>
<dbReference type="PIRSF" id="PIRSF006293">
    <property type="entry name" value="ExsB"/>
    <property type="match status" value="1"/>
</dbReference>
<dbReference type="SUPFAM" id="SSF52402">
    <property type="entry name" value="Adenine nucleotide alpha hydrolases-like"/>
    <property type="match status" value="1"/>
</dbReference>
<reference key="1">
    <citation type="submission" date="2007-04" db="EMBL/GenBank/DDBJ databases">
        <title>Complete genome sequence of the nitrogen-fixing bacterium Azorhizobium caulinodans ORS571.</title>
        <authorList>
            <person name="Lee K.B."/>
            <person name="Backer P.D."/>
            <person name="Aono T."/>
            <person name="Liu C.T."/>
            <person name="Suzuki S."/>
            <person name="Suzuki T."/>
            <person name="Kaneko T."/>
            <person name="Yamada M."/>
            <person name="Tabata S."/>
            <person name="Kupfer D.M."/>
            <person name="Najar F.Z."/>
            <person name="Wiley G.B."/>
            <person name="Roe B."/>
            <person name="Binnewies T."/>
            <person name="Ussery D."/>
            <person name="Vereecke D."/>
            <person name="Gevers D."/>
            <person name="Holsters M."/>
            <person name="Oyaizu H."/>
        </authorList>
    </citation>
    <scope>NUCLEOTIDE SEQUENCE [LARGE SCALE GENOMIC DNA]</scope>
    <source>
        <strain>ATCC 43989 / DSM 5975 / JCM 20966 / LMG 6465 / NBRC 14845 / NCIMB 13405 / ORS 571</strain>
    </source>
</reference>
<comment type="function">
    <text evidence="1">Catalyzes the ATP-dependent conversion of 7-carboxy-7-deazaguanine (CDG) to 7-cyano-7-deazaguanine (preQ(0)).</text>
</comment>
<comment type="catalytic activity">
    <reaction evidence="1">
        <text>7-carboxy-7-deazaguanine + NH4(+) + ATP = 7-cyano-7-deazaguanine + ADP + phosphate + H2O + H(+)</text>
        <dbReference type="Rhea" id="RHEA:27982"/>
        <dbReference type="ChEBI" id="CHEBI:15377"/>
        <dbReference type="ChEBI" id="CHEBI:15378"/>
        <dbReference type="ChEBI" id="CHEBI:28938"/>
        <dbReference type="ChEBI" id="CHEBI:30616"/>
        <dbReference type="ChEBI" id="CHEBI:43474"/>
        <dbReference type="ChEBI" id="CHEBI:45075"/>
        <dbReference type="ChEBI" id="CHEBI:61036"/>
        <dbReference type="ChEBI" id="CHEBI:456216"/>
        <dbReference type="EC" id="6.3.4.20"/>
    </reaction>
</comment>
<comment type="cofactor">
    <cofactor evidence="1">
        <name>Zn(2+)</name>
        <dbReference type="ChEBI" id="CHEBI:29105"/>
    </cofactor>
    <text evidence="1">Binds 1 zinc ion per subunit.</text>
</comment>
<comment type="pathway">
    <text evidence="1">Purine metabolism; 7-cyano-7-deazaguanine biosynthesis.</text>
</comment>
<comment type="similarity">
    <text evidence="1">Belongs to the QueC family.</text>
</comment>
<evidence type="ECO:0000255" key="1">
    <source>
        <dbReference type="HAMAP-Rule" id="MF_01633"/>
    </source>
</evidence>
<proteinExistence type="inferred from homology"/>
<protein>
    <recommendedName>
        <fullName evidence="1">7-cyano-7-deazaguanine synthase</fullName>
        <ecNumber evidence="1">6.3.4.20</ecNumber>
    </recommendedName>
    <alternativeName>
        <fullName evidence="1">7-cyano-7-carbaguanine synthase</fullName>
    </alternativeName>
    <alternativeName>
        <fullName evidence="1">PreQ(0) synthase</fullName>
    </alternativeName>
    <alternativeName>
        <fullName evidence="1">Queuosine biosynthesis protein QueC</fullName>
    </alternativeName>
</protein>
<organism>
    <name type="scientific">Azorhizobium caulinodans (strain ATCC 43989 / DSM 5975 / JCM 20966 / LMG 6465 / NBRC 14845 / NCIMB 13405 / ORS 571)</name>
    <dbReference type="NCBI Taxonomy" id="438753"/>
    <lineage>
        <taxon>Bacteria</taxon>
        <taxon>Pseudomonadati</taxon>
        <taxon>Pseudomonadota</taxon>
        <taxon>Alphaproteobacteria</taxon>
        <taxon>Hyphomicrobiales</taxon>
        <taxon>Xanthobacteraceae</taxon>
        <taxon>Azorhizobium</taxon>
    </lineage>
</organism>